<reference key="1">
    <citation type="submission" date="2008-03" db="EMBL/GenBank/DDBJ databases">
        <title>Complete sequence of Thermoproteus neutrophilus V24Sta.</title>
        <authorList>
            <consortium name="US DOE Joint Genome Institute"/>
            <person name="Copeland A."/>
            <person name="Lucas S."/>
            <person name="Lapidus A."/>
            <person name="Glavina del Rio T."/>
            <person name="Dalin E."/>
            <person name="Tice H."/>
            <person name="Bruce D."/>
            <person name="Goodwin L."/>
            <person name="Pitluck S."/>
            <person name="Sims D."/>
            <person name="Brettin T."/>
            <person name="Detter J.C."/>
            <person name="Han C."/>
            <person name="Kuske C.R."/>
            <person name="Schmutz J."/>
            <person name="Larimer F."/>
            <person name="Land M."/>
            <person name="Hauser L."/>
            <person name="Kyrpides N."/>
            <person name="Mikhailova N."/>
            <person name="Biddle J.F."/>
            <person name="Zhang Z."/>
            <person name="Fitz-Gibbon S.T."/>
            <person name="Lowe T.M."/>
            <person name="Saltikov C."/>
            <person name="House C.H."/>
            <person name="Richardson P."/>
        </authorList>
    </citation>
    <scope>NUCLEOTIDE SEQUENCE [LARGE SCALE GENOMIC DNA]</scope>
    <source>
        <strain>DSM 2338 / JCM 9278 / NBRC 100436 / V24Sta</strain>
    </source>
</reference>
<accession>B1YAC8</accession>
<organism>
    <name type="scientific">Pyrobaculum neutrophilum (strain DSM 2338 / JCM 9278 / NBRC 100436 / V24Sta)</name>
    <name type="common">Thermoproteus neutrophilus</name>
    <dbReference type="NCBI Taxonomy" id="444157"/>
    <lineage>
        <taxon>Archaea</taxon>
        <taxon>Thermoproteota</taxon>
        <taxon>Thermoprotei</taxon>
        <taxon>Thermoproteales</taxon>
        <taxon>Thermoproteaceae</taxon>
        <taxon>Pyrobaculum</taxon>
    </lineage>
</organism>
<evidence type="ECO:0000255" key="1">
    <source>
        <dbReference type="HAMAP-Rule" id="MF_01318"/>
    </source>
</evidence>
<evidence type="ECO:0000305" key="2"/>
<comment type="function">
    <text evidence="1">Binds directly to 23S rRNA. Probably involved in E site tRNA release.</text>
</comment>
<comment type="function">
    <text evidence="1">Protein L1 is also a translational repressor protein, it controls the translation of its operon by binding to its mRNA.</text>
</comment>
<comment type="subunit">
    <text evidence="1">Part of the 50S ribosomal subunit.</text>
</comment>
<comment type="similarity">
    <text evidence="1">Belongs to the universal ribosomal protein uL1 family.</text>
</comment>
<proteinExistence type="inferred from homology"/>
<name>RL1_PYRNV</name>
<keyword id="KW-0678">Repressor</keyword>
<keyword id="KW-0687">Ribonucleoprotein</keyword>
<keyword id="KW-0689">Ribosomal protein</keyword>
<keyword id="KW-0694">RNA-binding</keyword>
<keyword id="KW-0699">rRNA-binding</keyword>
<keyword id="KW-0810">Translation regulation</keyword>
<keyword id="KW-0820">tRNA-binding</keyword>
<protein>
    <recommendedName>
        <fullName evidence="1">Large ribosomal subunit protein uL1</fullName>
    </recommendedName>
    <alternativeName>
        <fullName evidence="2">50S ribosomal protein L1</fullName>
    </alternativeName>
</protein>
<sequence length="222" mass="24837">MSAVINKEALLAKIEEALRRGKPRRFRQSVELILVLREVDLSKPENRINLLVELPHPPKPNKVAAFAHGAFEVQAKNAGVDAVISRDQVEGLSGNKRAIRKLAKQYDFFIAPPDLMPLLGRVVGPIFGPRGKMPEVAPPNVDVKSLVERLRRSVRVKLRNEPVIKVRIGAEGQKPEEVLENALAVLEDVNRKFSLRQYLKDVYIKKTMGPPVKAKALEVLAR</sequence>
<feature type="chain" id="PRO_1000141474" description="Large ribosomal subunit protein uL1">
    <location>
        <begin position="1"/>
        <end position="222"/>
    </location>
</feature>
<gene>
    <name evidence="1" type="primary">rpl1</name>
    <name type="ordered locus">Tneu_1655</name>
</gene>
<dbReference type="EMBL" id="CP001014">
    <property type="protein sequence ID" value="ACB40577.1"/>
    <property type="molecule type" value="Genomic_DNA"/>
</dbReference>
<dbReference type="RefSeq" id="WP_012350996.1">
    <property type="nucleotide sequence ID" value="NC_010525.1"/>
</dbReference>
<dbReference type="SMR" id="B1YAC8"/>
<dbReference type="STRING" id="444157.Tneu_1655"/>
<dbReference type="GeneID" id="6165584"/>
<dbReference type="KEGG" id="tne:Tneu_1655"/>
<dbReference type="eggNOG" id="arCOG04289">
    <property type="taxonomic scope" value="Archaea"/>
</dbReference>
<dbReference type="HOGENOM" id="CLU_062853_4_0_2"/>
<dbReference type="OrthoDB" id="10382at2157"/>
<dbReference type="Proteomes" id="UP000001694">
    <property type="component" value="Chromosome"/>
</dbReference>
<dbReference type="GO" id="GO:0015934">
    <property type="term" value="C:large ribosomal subunit"/>
    <property type="evidence" value="ECO:0007669"/>
    <property type="project" value="InterPro"/>
</dbReference>
<dbReference type="GO" id="GO:0019843">
    <property type="term" value="F:rRNA binding"/>
    <property type="evidence" value="ECO:0007669"/>
    <property type="project" value="UniProtKB-UniRule"/>
</dbReference>
<dbReference type="GO" id="GO:0003735">
    <property type="term" value="F:structural constituent of ribosome"/>
    <property type="evidence" value="ECO:0007669"/>
    <property type="project" value="InterPro"/>
</dbReference>
<dbReference type="GO" id="GO:0000049">
    <property type="term" value="F:tRNA binding"/>
    <property type="evidence" value="ECO:0007669"/>
    <property type="project" value="UniProtKB-KW"/>
</dbReference>
<dbReference type="GO" id="GO:0006417">
    <property type="term" value="P:regulation of translation"/>
    <property type="evidence" value="ECO:0007669"/>
    <property type="project" value="UniProtKB-KW"/>
</dbReference>
<dbReference type="GO" id="GO:0006412">
    <property type="term" value="P:translation"/>
    <property type="evidence" value="ECO:0007669"/>
    <property type="project" value="UniProtKB-UniRule"/>
</dbReference>
<dbReference type="CDD" id="cd00403">
    <property type="entry name" value="Ribosomal_L1"/>
    <property type="match status" value="1"/>
</dbReference>
<dbReference type="FunFam" id="3.40.50.790:FF:000005">
    <property type="entry name" value="50S ribosomal protein L1"/>
    <property type="match status" value="1"/>
</dbReference>
<dbReference type="Gene3D" id="3.30.190.20">
    <property type="match status" value="1"/>
</dbReference>
<dbReference type="Gene3D" id="3.40.50.790">
    <property type="match status" value="1"/>
</dbReference>
<dbReference type="HAMAP" id="MF_01318_A">
    <property type="entry name" value="Ribosomal_uL1_A"/>
    <property type="match status" value="1"/>
</dbReference>
<dbReference type="InterPro" id="IPR002143">
    <property type="entry name" value="Ribosomal_uL1"/>
</dbReference>
<dbReference type="InterPro" id="IPR023674">
    <property type="entry name" value="Ribosomal_uL1-like"/>
</dbReference>
<dbReference type="InterPro" id="IPR028364">
    <property type="entry name" value="Ribosomal_uL1/biogenesis"/>
</dbReference>
<dbReference type="InterPro" id="IPR016095">
    <property type="entry name" value="Ribosomal_uL1_3-a/b-sand"/>
</dbReference>
<dbReference type="InterPro" id="IPR023669">
    <property type="entry name" value="Ribosomal_uL1_arc"/>
</dbReference>
<dbReference type="InterPro" id="IPR023673">
    <property type="entry name" value="Ribosomal_uL1_CS"/>
</dbReference>
<dbReference type="NCBIfam" id="NF003244">
    <property type="entry name" value="PRK04203.1"/>
    <property type="match status" value="1"/>
</dbReference>
<dbReference type="PANTHER" id="PTHR36427">
    <property type="entry name" value="54S RIBOSOMAL PROTEIN L1, MITOCHONDRIAL"/>
    <property type="match status" value="1"/>
</dbReference>
<dbReference type="PANTHER" id="PTHR36427:SF3">
    <property type="entry name" value="LARGE RIBOSOMAL SUBUNIT PROTEIN UL1M"/>
    <property type="match status" value="1"/>
</dbReference>
<dbReference type="Pfam" id="PF00687">
    <property type="entry name" value="Ribosomal_L1"/>
    <property type="match status" value="1"/>
</dbReference>
<dbReference type="PIRSF" id="PIRSF002155">
    <property type="entry name" value="Ribosomal_L1"/>
    <property type="match status" value="1"/>
</dbReference>
<dbReference type="SUPFAM" id="SSF56808">
    <property type="entry name" value="Ribosomal protein L1"/>
    <property type="match status" value="1"/>
</dbReference>
<dbReference type="PROSITE" id="PS01199">
    <property type="entry name" value="RIBOSOMAL_L1"/>
    <property type="match status" value="1"/>
</dbReference>